<comment type="function">
    <text evidence="1">Catalyzes the reduction of the glycolytic intermediate dihydroxyacetone phosphate (DHAP) to sn-glycerol 3-phosphate (G3P), the key precursor for phospholipid synthesis.</text>
</comment>
<comment type="catalytic activity">
    <reaction evidence="1">
        <text>sn-glycerol 3-phosphate + NAD(+) = dihydroxyacetone phosphate + NADH + H(+)</text>
        <dbReference type="Rhea" id="RHEA:11092"/>
        <dbReference type="ChEBI" id="CHEBI:15378"/>
        <dbReference type="ChEBI" id="CHEBI:57540"/>
        <dbReference type="ChEBI" id="CHEBI:57597"/>
        <dbReference type="ChEBI" id="CHEBI:57642"/>
        <dbReference type="ChEBI" id="CHEBI:57945"/>
        <dbReference type="EC" id="1.1.1.94"/>
    </reaction>
    <physiologicalReaction direction="right-to-left" evidence="1">
        <dbReference type="Rhea" id="RHEA:11094"/>
    </physiologicalReaction>
</comment>
<comment type="catalytic activity">
    <reaction evidence="1">
        <text>sn-glycerol 3-phosphate + NADP(+) = dihydroxyacetone phosphate + NADPH + H(+)</text>
        <dbReference type="Rhea" id="RHEA:11096"/>
        <dbReference type="ChEBI" id="CHEBI:15378"/>
        <dbReference type="ChEBI" id="CHEBI:57597"/>
        <dbReference type="ChEBI" id="CHEBI:57642"/>
        <dbReference type="ChEBI" id="CHEBI:57783"/>
        <dbReference type="ChEBI" id="CHEBI:58349"/>
        <dbReference type="EC" id="1.1.1.94"/>
    </reaction>
    <physiologicalReaction direction="right-to-left" evidence="1">
        <dbReference type="Rhea" id="RHEA:11098"/>
    </physiologicalReaction>
</comment>
<comment type="pathway">
    <text evidence="1">Membrane lipid metabolism; glycerophospholipid metabolism.</text>
</comment>
<comment type="subcellular location">
    <subcellularLocation>
        <location evidence="1">Cytoplasm</location>
    </subcellularLocation>
</comment>
<comment type="similarity">
    <text evidence="1">Belongs to the NAD-dependent glycerol-3-phosphate dehydrogenase family.</text>
</comment>
<gene>
    <name evidence="1" type="primary">gpsA</name>
    <name type="ordered locus">Dvul_0226</name>
</gene>
<feature type="chain" id="PRO_1000049500" description="Glycerol-3-phosphate dehydrogenase [NAD(P)+]">
    <location>
        <begin position="1"/>
        <end position="330"/>
    </location>
</feature>
<feature type="active site" description="Proton acceptor" evidence="1">
    <location>
        <position position="190"/>
    </location>
</feature>
<feature type="binding site" evidence="1">
    <location>
        <position position="10"/>
    </location>
    <ligand>
        <name>NADPH</name>
        <dbReference type="ChEBI" id="CHEBI:57783"/>
    </ligand>
</feature>
<feature type="binding site" evidence="1">
    <location>
        <position position="11"/>
    </location>
    <ligand>
        <name>NADPH</name>
        <dbReference type="ChEBI" id="CHEBI:57783"/>
    </ligand>
</feature>
<feature type="binding site" evidence="1">
    <location>
        <position position="31"/>
    </location>
    <ligand>
        <name>NADPH</name>
        <dbReference type="ChEBI" id="CHEBI:57783"/>
    </ligand>
</feature>
<feature type="binding site" evidence="1">
    <location>
        <position position="105"/>
    </location>
    <ligand>
        <name>NADPH</name>
        <dbReference type="ChEBI" id="CHEBI:57783"/>
    </ligand>
</feature>
<feature type="binding site" evidence="1">
    <location>
        <position position="105"/>
    </location>
    <ligand>
        <name>sn-glycerol 3-phosphate</name>
        <dbReference type="ChEBI" id="CHEBI:57597"/>
    </ligand>
</feature>
<feature type="binding site" evidence="1">
    <location>
        <position position="135"/>
    </location>
    <ligand>
        <name>sn-glycerol 3-phosphate</name>
        <dbReference type="ChEBI" id="CHEBI:57597"/>
    </ligand>
</feature>
<feature type="binding site" evidence="1">
    <location>
        <position position="137"/>
    </location>
    <ligand>
        <name>sn-glycerol 3-phosphate</name>
        <dbReference type="ChEBI" id="CHEBI:57597"/>
    </ligand>
</feature>
<feature type="binding site" evidence="1">
    <location>
        <position position="139"/>
    </location>
    <ligand>
        <name>NADPH</name>
        <dbReference type="ChEBI" id="CHEBI:57783"/>
    </ligand>
</feature>
<feature type="binding site" evidence="1">
    <location>
        <position position="190"/>
    </location>
    <ligand>
        <name>sn-glycerol 3-phosphate</name>
        <dbReference type="ChEBI" id="CHEBI:57597"/>
    </ligand>
</feature>
<feature type="binding site" evidence="1">
    <location>
        <position position="243"/>
    </location>
    <ligand>
        <name>sn-glycerol 3-phosphate</name>
        <dbReference type="ChEBI" id="CHEBI:57597"/>
    </ligand>
</feature>
<feature type="binding site" evidence="1">
    <location>
        <position position="253"/>
    </location>
    <ligand>
        <name>sn-glycerol 3-phosphate</name>
        <dbReference type="ChEBI" id="CHEBI:57597"/>
    </ligand>
</feature>
<feature type="binding site" evidence="1">
    <location>
        <position position="254"/>
    </location>
    <ligand>
        <name>NADPH</name>
        <dbReference type="ChEBI" id="CHEBI:57783"/>
    </ligand>
</feature>
<feature type="binding site" evidence="1">
    <location>
        <position position="254"/>
    </location>
    <ligand>
        <name>sn-glycerol 3-phosphate</name>
        <dbReference type="ChEBI" id="CHEBI:57597"/>
    </ligand>
</feature>
<feature type="binding site" evidence="1">
    <location>
        <position position="255"/>
    </location>
    <ligand>
        <name>sn-glycerol 3-phosphate</name>
        <dbReference type="ChEBI" id="CHEBI:57597"/>
    </ligand>
</feature>
<feature type="binding site" evidence="1">
    <location>
        <position position="278"/>
    </location>
    <ligand>
        <name>NADPH</name>
        <dbReference type="ChEBI" id="CHEBI:57783"/>
    </ligand>
</feature>
<feature type="binding site" evidence="1">
    <location>
        <position position="280"/>
    </location>
    <ligand>
        <name>NADPH</name>
        <dbReference type="ChEBI" id="CHEBI:57783"/>
    </ligand>
</feature>
<reference key="1">
    <citation type="journal article" date="2009" name="Environ. Microbiol.">
        <title>Contribution of mobile genetic elements to Desulfovibrio vulgaris genome plasticity.</title>
        <authorList>
            <person name="Walker C.B."/>
            <person name="Stolyar S."/>
            <person name="Chivian D."/>
            <person name="Pinel N."/>
            <person name="Gabster J.A."/>
            <person name="Dehal P.S."/>
            <person name="He Z."/>
            <person name="Yang Z.K."/>
            <person name="Yen H.C."/>
            <person name="Zhou J."/>
            <person name="Wall J.D."/>
            <person name="Hazen T.C."/>
            <person name="Arkin A.P."/>
            <person name="Stahl D.A."/>
        </authorList>
    </citation>
    <scope>NUCLEOTIDE SEQUENCE [LARGE SCALE GENOMIC DNA]</scope>
    <source>
        <strain>DP4</strain>
    </source>
</reference>
<organism>
    <name type="scientific">Nitratidesulfovibrio vulgaris (strain DP4)</name>
    <name type="common">Desulfovibrio vulgaris</name>
    <dbReference type="NCBI Taxonomy" id="391774"/>
    <lineage>
        <taxon>Bacteria</taxon>
        <taxon>Pseudomonadati</taxon>
        <taxon>Thermodesulfobacteriota</taxon>
        <taxon>Desulfovibrionia</taxon>
        <taxon>Desulfovibrionales</taxon>
        <taxon>Desulfovibrionaceae</taxon>
        <taxon>Nitratidesulfovibrio</taxon>
    </lineage>
</organism>
<protein>
    <recommendedName>
        <fullName evidence="1">Glycerol-3-phosphate dehydrogenase [NAD(P)+]</fullName>
        <ecNumber evidence="1">1.1.1.94</ecNumber>
    </recommendedName>
    <alternativeName>
        <fullName evidence="1">NAD(P)(+)-dependent glycerol-3-phosphate dehydrogenase</fullName>
    </alternativeName>
    <alternativeName>
        <fullName evidence="1">NAD(P)H-dependent dihydroxyacetone-phosphate reductase</fullName>
    </alternativeName>
</protein>
<sequence>MKIAVLGGGSWGTALAHLLAGKGEDVRLWVRDPAVVEGVNRDHENPRYLKGLHLHEALRATCDAGEALEGADILLSVVPCQQTRSVLRSLRPRLKSGMVVVSASKGIETDGLRTVGEMVEEELAGLAPRYAVISGPSFAAEVVAGMPTAVVLGCADRDLGGTLREVFSTPTFRTYSCTDVRGVELGGAVKNVIAIAAGLSDGLGFGSNARAGLITRGLAEMGRLGVALGARASTFMGLSGLGDLVLTCTGDLSRNRQVGLRLAAGQGLDAIVAGMGMVAEGVKTTEAVHALARREGADLPITRAMYAVLHDGRDPRDMVQELMTRELREE</sequence>
<proteinExistence type="inferred from homology"/>
<name>GPDA_NITV4</name>
<keyword id="KW-0963">Cytoplasm</keyword>
<keyword id="KW-0444">Lipid biosynthesis</keyword>
<keyword id="KW-0443">Lipid metabolism</keyword>
<keyword id="KW-0520">NAD</keyword>
<keyword id="KW-0521">NADP</keyword>
<keyword id="KW-0547">Nucleotide-binding</keyword>
<keyword id="KW-0560">Oxidoreductase</keyword>
<keyword id="KW-0594">Phospholipid biosynthesis</keyword>
<keyword id="KW-1208">Phospholipid metabolism</keyword>
<accession>A1V9Y4</accession>
<evidence type="ECO:0000255" key="1">
    <source>
        <dbReference type="HAMAP-Rule" id="MF_00394"/>
    </source>
</evidence>
<dbReference type="EC" id="1.1.1.94" evidence="1"/>
<dbReference type="EMBL" id="CP000527">
    <property type="protein sequence ID" value="ABM27250.1"/>
    <property type="molecule type" value="Genomic_DNA"/>
</dbReference>
<dbReference type="RefSeq" id="WP_011791474.1">
    <property type="nucleotide sequence ID" value="NC_008751.1"/>
</dbReference>
<dbReference type="SMR" id="A1V9Y4"/>
<dbReference type="KEGG" id="dvl:Dvul_0226"/>
<dbReference type="HOGENOM" id="CLU_033449_0_2_7"/>
<dbReference type="UniPathway" id="UPA00940"/>
<dbReference type="Proteomes" id="UP000009173">
    <property type="component" value="Chromosome"/>
</dbReference>
<dbReference type="GO" id="GO:0005829">
    <property type="term" value="C:cytosol"/>
    <property type="evidence" value="ECO:0007669"/>
    <property type="project" value="TreeGrafter"/>
</dbReference>
<dbReference type="GO" id="GO:0047952">
    <property type="term" value="F:glycerol-3-phosphate dehydrogenase [NAD(P)+] activity"/>
    <property type="evidence" value="ECO:0007669"/>
    <property type="project" value="UniProtKB-UniRule"/>
</dbReference>
<dbReference type="GO" id="GO:0051287">
    <property type="term" value="F:NAD binding"/>
    <property type="evidence" value="ECO:0007669"/>
    <property type="project" value="InterPro"/>
</dbReference>
<dbReference type="GO" id="GO:0005975">
    <property type="term" value="P:carbohydrate metabolic process"/>
    <property type="evidence" value="ECO:0007669"/>
    <property type="project" value="InterPro"/>
</dbReference>
<dbReference type="GO" id="GO:0046167">
    <property type="term" value="P:glycerol-3-phosphate biosynthetic process"/>
    <property type="evidence" value="ECO:0007669"/>
    <property type="project" value="UniProtKB-UniRule"/>
</dbReference>
<dbReference type="GO" id="GO:0046168">
    <property type="term" value="P:glycerol-3-phosphate catabolic process"/>
    <property type="evidence" value="ECO:0007669"/>
    <property type="project" value="InterPro"/>
</dbReference>
<dbReference type="GO" id="GO:0006650">
    <property type="term" value="P:glycerophospholipid metabolic process"/>
    <property type="evidence" value="ECO:0007669"/>
    <property type="project" value="UniProtKB-UniRule"/>
</dbReference>
<dbReference type="GO" id="GO:0008654">
    <property type="term" value="P:phospholipid biosynthetic process"/>
    <property type="evidence" value="ECO:0007669"/>
    <property type="project" value="UniProtKB-KW"/>
</dbReference>
<dbReference type="FunFam" id="1.10.1040.10:FF:000001">
    <property type="entry name" value="Glycerol-3-phosphate dehydrogenase [NAD(P)+]"/>
    <property type="match status" value="1"/>
</dbReference>
<dbReference type="FunFam" id="3.40.50.720:FF:000019">
    <property type="entry name" value="Glycerol-3-phosphate dehydrogenase [NAD(P)+]"/>
    <property type="match status" value="1"/>
</dbReference>
<dbReference type="Gene3D" id="1.10.1040.10">
    <property type="entry name" value="N-(1-d-carboxylethyl)-l-norvaline Dehydrogenase, domain 2"/>
    <property type="match status" value="1"/>
</dbReference>
<dbReference type="Gene3D" id="3.40.50.720">
    <property type="entry name" value="NAD(P)-binding Rossmann-like Domain"/>
    <property type="match status" value="1"/>
</dbReference>
<dbReference type="HAMAP" id="MF_00394">
    <property type="entry name" value="NAD_Glyc3P_dehydrog"/>
    <property type="match status" value="1"/>
</dbReference>
<dbReference type="InterPro" id="IPR008927">
    <property type="entry name" value="6-PGluconate_DH-like_C_sf"/>
</dbReference>
<dbReference type="InterPro" id="IPR013328">
    <property type="entry name" value="6PGD_dom2"/>
</dbReference>
<dbReference type="InterPro" id="IPR006168">
    <property type="entry name" value="G3P_DH_NAD-dep"/>
</dbReference>
<dbReference type="InterPro" id="IPR006109">
    <property type="entry name" value="G3P_DH_NAD-dep_C"/>
</dbReference>
<dbReference type="InterPro" id="IPR011128">
    <property type="entry name" value="G3P_DH_NAD-dep_N"/>
</dbReference>
<dbReference type="InterPro" id="IPR036291">
    <property type="entry name" value="NAD(P)-bd_dom_sf"/>
</dbReference>
<dbReference type="NCBIfam" id="NF000940">
    <property type="entry name" value="PRK00094.1-2"/>
    <property type="match status" value="1"/>
</dbReference>
<dbReference type="NCBIfam" id="NF000942">
    <property type="entry name" value="PRK00094.1-4"/>
    <property type="match status" value="1"/>
</dbReference>
<dbReference type="PANTHER" id="PTHR11728">
    <property type="entry name" value="GLYCEROL-3-PHOSPHATE DEHYDROGENASE"/>
    <property type="match status" value="1"/>
</dbReference>
<dbReference type="PANTHER" id="PTHR11728:SF1">
    <property type="entry name" value="GLYCEROL-3-PHOSPHATE DEHYDROGENASE [NAD(+)] 2, CHLOROPLASTIC"/>
    <property type="match status" value="1"/>
</dbReference>
<dbReference type="Pfam" id="PF07479">
    <property type="entry name" value="NAD_Gly3P_dh_C"/>
    <property type="match status" value="1"/>
</dbReference>
<dbReference type="Pfam" id="PF01210">
    <property type="entry name" value="NAD_Gly3P_dh_N"/>
    <property type="match status" value="1"/>
</dbReference>
<dbReference type="PIRSF" id="PIRSF000114">
    <property type="entry name" value="Glycerol-3-P_dh"/>
    <property type="match status" value="1"/>
</dbReference>
<dbReference type="PRINTS" id="PR00077">
    <property type="entry name" value="GPDHDRGNASE"/>
</dbReference>
<dbReference type="SUPFAM" id="SSF48179">
    <property type="entry name" value="6-phosphogluconate dehydrogenase C-terminal domain-like"/>
    <property type="match status" value="1"/>
</dbReference>
<dbReference type="SUPFAM" id="SSF51735">
    <property type="entry name" value="NAD(P)-binding Rossmann-fold domains"/>
    <property type="match status" value="1"/>
</dbReference>
<dbReference type="PROSITE" id="PS00957">
    <property type="entry name" value="NAD_G3PDH"/>
    <property type="match status" value="1"/>
</dbReference>